<reference key="1">
    <citation type="journal article" date="1989" name="Nucleic Acids Res.">
        <title>Xylose isomerase from Actinoplanes missouriensis: primary structure of the gene and the protein.</title>
        <authorList>
            <person name="Amore R."/>
            <person name="Hollenberg C.P."/>
        </authorList>
    </citation>
    <scope>NUCLEOTIDE SEQUENCE [GENOMIC DNA]</scope>
    <source>
        <strain>ATCC 14538 / DSM 43046 / CBS 188.64 / JCM 3121 / NBRC 102363 / NCIMB 12654 / NRRL B-3342 / UNCC 431</strain>
    </source>
</reference>
<reference key="2">
    <citation type="submission" date="2012-02" db="EMBL/GenBank/DDBJ databases">
        <title>Complete genome sequence of Actinoplanes missouriensis 431 (= NBRC 102363).</title>
        <authorList>
            <person name="Ohnishi Y."/>
            <person name="Ishikawa J."/>
            <person name="Sekine M."/>
            <person name="Hosoyama A."/>
            <person name="Harada T."/>
            <person name="Narita H."/>
            <person name="Hata T."/>
            <person name="Konno Y."/>
            <person name="Tutikane K."/>
            <person name="Fujita N."/>
            <person name="Horinouchi S."/>
            <person name="Hayakawa M."/>
        </authorList>
    </citation>
    <scope>NUCLEOTIDE SEQUENCE [LARGE SCALE GENOMIC DNA]</scope>
    <source>
        <strain>ATCC 14538 / DSM 43046 / CBS 188.64 / JCM 3121 / NBRC 102363 / NCIMB 12654 / NRRL B-3342 / UNCC 431</strain>
    </source>
</reference>
<reference key="3">
    <citation type="journal article" date="1988" name="Proteins">
        <title>Structural analysis of the 2.8 A model of Xylose isomerase from Actinoplanes missouriensis.</title>
        <authorList>
            <person name="Rey F."/>
            <person name="Jenkins J."/>
            <person name="Janin J."/>
            <person name="Lasters I."/>
            <person name="Alard P."/>
            <person name="Claessens M."/>
            <person name="Matthyssens G."/>
            <person name="Wodak S.J."/>
        </authorList>
    </citation>
    <scope>X-RAY CRYSTALLOGRAPHY (2.8 ANGSTROMS)</scope>
</reference>
<reference key="4">
    <citation type="journal article" date="1992" name="Biochemistry">
        <title>Protein engineering of xylose (glucose) isomerase from Actinoplanes missouriensis. 1. Crystallography and site-directed mutagenesis of metal binding sites.</title>
        <authorList>
            <person name="Jenkins J."/>
            <person name="Janin J."/>
            <person name="Rey F."/>
            <person name="Chiadmi M."/>
            <person name="van Tilbeurgh H."/>
            <person name="Lasters I."/>
            <person name="de Maeyer M."/>
            <person name="van Belle D."/>
            <person name="Wodak S.J."/>
            <person name="Lauwereys M."/>
            <person name="Stanssens P."/>
            <person name="Mrabet N.T."/>
            <person name="Snauwaert J."/>
            <person name="Matthyssens G."/>
            <person name="Lambeir A.-M."/>
        </authorList>
    </citation>
    <scope>X-RAY CRYSTALLOGRAPHY (2.4 ANGSTROMS)</scope>
</reference>
<reference key="5">
    <citation type="journal article" date="1999" name="Acta Crystallogr. D">
        <title>Multiwavelength anomalous solvent contrast (MASC): derivation of envelope structure-factor amplitudes and comparison with model values.</title>
        <authorList>
            <person name="Ramin M."/>
            <person name="Shepard W."/>
            <person name="Fourme R."/>
            <person name="Kahn R."/>
        </authorList>
    </citation>
    <scope>X-RAY CRYSTALLOGRAPHY (4.1 ANGSTROMS)</scope>
</reference>
<reference key="6">
    <citation type="journal article" date="1992" name="Biochemistry">
        <title>Protein engineering of xylose (glucose) isomerase from Actinoplanes missouriensis. 2. Site-directed mutagenesis of the xylose binding site.</title>
        <authorList>
            <person name="Lambeir A.-M."/>
            <person name="Lauwereys M."/>
            <person name="Stanssens P."/>
            <person name="Mrabet N.T."/>
            <person name="Snauwaert J."/>
            <person name="van Tilbeurgh H."/>
            <person name="Matthyssens G."/>
            <person name="Lasters I."/>
            <person name="de Maeyer M."/>
            <person name="Wodak S.J."/>
            <person name="Jenkins J."/>
            <person name="Chiadmi M."/>
            <person name="Janin J."/>
        </authorList>
    </citation>
    <scope>MUTAGENESIS</scope>
</reference>
<reference key="7">
    <citation type="journal article" date="1992" name="Biochemistry">
        <title>Protein engineering of xylose (glucose) isomerase from Actinoplanes missouriensis. 3. Changing metal specificity and the pH profile by site-directed mutagenesis.</title>
        <authorList>
            <person name="van Tilbeurgh H."/>
            <person name="Jenkins J."/>
            <person name="Chiadmi M."/>
            <person name="Janin J."/>
            <person name="Wodak S.J."/>
            <person name="Mrabet N.T."/>
            <person name="Lambeir A.-M."/>
        </authorList>
    </citation>
    <scope>MUTAGENESIS</scope>
</reference>
<sequence>MSVQATREDKFSFGLWTVGWQARDAFGDATRTALDPVEAVHKLAEIGAYGITFHDDDLVPFGSDAQTRDGIIAGFKKALDETGLIVPMVTTNLFTHPVFKDGGFTSNDRSVRRYAIRKVLRQMDLGAELGAKTLVLWGGREGAEYDSAKDVSAALDRYREALNLLAQYSEDRGYGLRFAIEPKPNEPRGDILLPTAGHAIAFVQELERPELFGINPETGHEQMSNLNFTQGIAQALWHKKLFHIDLNGQHGPKFDQDLVFGHGDLLNAFSLVDLLENGPDGAPAYDGPRHFDYKPSRTEDYDGVWESAKANIRMYLLLKERAKAFRADPEVQEALAASKVAELKTPTLNPGEGYAELLADRSAFEDYDADAVGAKGFGFVKLNQLAIEHLLGAR</sequence>
<organism>
    <name type="scientific">Actinoplanes missouriensis (strain ATCC 14538 / DSM 43046 / CBS 188.64 / JCM 3121 / NBRC 102363 / NCIMB 12654 / NRRL B-3342 / UNCC 431)</name>
    <dbReference type="NCBI Taxonomy" id="512565"/>
    <lineage>
        <taxon>Bacteria</taxon>
        <taxon>Bacillati</taxon>
        <taxon>Actinomycetota</taxon>
        <taxon>Actinomycetes</taxon>
        <taxon>Micromonosporales</taxon>
        <taxon>Micromonosporaceae</taxon>
        <taxon>Actinoplanes</taxon>
    </lineage>
</organism>
<accession>P12851</accession>
<accession>I0GZR8</accession>
<keyword id="KW-0002">3D-structure</keyword>
<keyword id="KW-0119">Carbohydrate metabolism</keyword>
<keyword id="KW-0963">Cytoplasm</keyword>
<keyword id="KW-0413">Isomerase</keyword>
<keyword id="KW-0460">Magnesium</keyword>
<keyword id="KW-0479">Metal-binding</keyword>
<keyword id="KW-1185">Reference proteome</keyword>
<keyword id="KW-0859">Xylose metabolism</keyword>
<dbReference type="EC" id="5.3.1.5"/>
<dbReference type="EMBL" id="X16042">
    <property type="protein sequence ID" value="CAA34164.1"/>
    <property type="molecule type" value="Genomic_DNA"/>
</dbReference>
<dbReference type="EMBL" id="AP012319">
    <property type="protein sequence ID" value="BAL86255.1"/>
    <property type="molecule type" value="Genomic_DNA"/>
</dbReference>
<dbReference type="PIR" id="S05998">
    <property type="entry name" value="ISMAXM"/>
</dbReference>
<dbReference type="RefSeq" id="WP_014441152.1">
    <property type="nucleotide sequence ID" value="NC_017093.1"/>
</dbReference>
<dbReference type="PDB" id="1BHW">
    <property type="method" value="X-ray"/>
    <property type="resolution" value="4.10 A"/>
    <property type="chains" value="A/B/C/D=2-394"/>
</dbReference>
<dbReference type="PDB" id="1XIM">
    <property type="method" value="X-ray"/>
    <property type="resolution" value="2.20 A"/>
    <property type="chains" value="A/B/C/D=2-394"/>
</dbReference>
<dbReference type="PDB" id="1XIN">
    <property type="method" value="X-ray"/>
    <property type="resolution" value="2.40 A"/>
    <property type="chains" value="A/B/C/D=2-394"/>
</dbReference>
<dbReference type="PDB" id="2XIM">
    <property type="method" value="X-ray"/>
    <property type="resolution" value="2.30 A"/>
    <property type="chains" value="A/B/C/D=2-394"/>
</dbReference>
<dbReference type="PDB" id="2XIN">
    <property type="method" value="X-ray"/>
    <property type="resolution" value="2.30 A"/>
    <property type="chains" value="A/B/C/D=2-394"/>
</dbReference>
<dbReference type="PDB" id="3XIM">
    <property type="method" value="X-ray"/>
    <property type="resolution" value="2.30 A"/>
    <property type="chains" value="A/B/C/D=2-394"/>
</dbReference>
<dbReference type="PDB" id="3XIN">
    <property type="method" value="X-ray"/>
    <property type="resolution" value="2.30 A"/>
    <property type="chains" value="A/B/C/D=2-394"/>
</dbReference>
<dbReference type="PDB" id="4XIM">
    <property type="method" value="X-ray"/>
    <property type="resolution" value="2.30 A"/>
    <property type="chains" value="A/B/C/D=2-394"/>
</dbReference>
<dbReference type="PDB" id="5XIM">
    <property type="method" value="X-ray"/>
    <property type="resolution" value="2.60 A"/>
    <property type="chains" value="A/B/C/D=2-394"/>
</dbReference>
<dbReference type="PDB" id="5XIN">
    <property type="method" value="X-ray"/>
    <property type="resolution" value="2.30 A"/>
    <property type="chains" value="A/B/C/D=2-394"/>
</dbReference>
<dbReference type="PDB" id="6XIM">
    <property type="method" value="X-ray"/>
    <property type="resolution" value="2.50 A"/>
    <property type="chains" value="A/B/C/D=2-394"/>
</dbReference>
<dbReference type="PDB" id="7XIM">
    <property type="method" value="X-ray"/>
    <property type="resolution" value="2.40 A"/>
    <property type="chains" value="A/B/C/D=2-394"/>
</dbReference>
<dbReference type="PDB" id="8XIM">
    <property type="method" value="X-ray"/>
    <property type="resolution" value="2.40 A"/>
    <property type="chains" value="A/B/C/D=2-394"/>
</dbReference>
<dbReference type="PDB" id="9XIM">
    <property type="method" value="X-ray"/>
    <property type="resolution" value="2.40 A"/>
    <property type="chains" value="A/B/C/D=2-394"/>
</dbReference>
<dbReference type="PDBsum" id="1BHW"/>
<dbReference type="PDBsum" id="1XIM"/>
<dbReference type="PDBsum" id="1XIN"/>
<dbReference type="PDBsum" id="2XIM"/>
<dbReference type="PDBsum" id="2XIN"/>
<dbReference type="PDBsum" id="3XIM"/>
<dbReference type="PDBsum" id="3XIN"/>
<dbReference type="PDBsum" id="4XIM"/>
<dbReference type="PDBsum" id="5XIM"/>
<dbReference type="PDBsum" id="5XIN"/>
<dbReference type="PDBsum" id="6XIM"/>
<dbReference type="PDBsum" id="7XIM"/>
<dbReference type="PDBsum" id="8XIM"/>
<dbReference type="PDBsum" id="9XIM"/>
<dbReference type="SMR" id="P12851"/>
<dbReference type="STRING" id="512565.AMIS_10350"/>
<dbReference type="DrugBank" id="DB11195">
    <property type="generic name" value="Xylitol"/>
</dbReference>
<dbReference type="KEGG" id="ams:AMIS_10350"/>
<dbReference type="PATRIC" id="fig|512565.3.peg.1041"/>
<dbReference type="eggNOG" id="COG2115">
    <property type="taxonomic scope" value="Bacteria"/>
</dbReference>
<dbReference type="HOGENOM" id="CLU_060750_0_0_11"/>
<dbReference type="OrthoDB" id="9763981at2"/>
<dbReference type="BRENDA" id="5.3.1.5">
    <property type="organism ID" value="141"/>
</dbReference>
<dbReference type="SABIO-RK" id="P12851"/>
<dbReference type="EvolutionaryTrace" id="P12851"/>
<dbReference type="Proteomes" id="UP000007882">
    <property type="component" value="Chromosome"/>
</dbReference>
<dbReference type="GO" id="GO:0005737">
    <property type="term" value="C:cytoplasm"/>
    <property type="evidence" value="ECO:0007669"/>
    <property type="project" value="UniProtKB-SubCell"/>
</dbReference>
<dbReference type="GO" id="GO:0000287">
    <property type="term" value="F:magnesium ion binding"/>
    <property type="evidence" value="ECO:0007669"/>
    <property type="project" value="UniProtKB-UniRule"/>
</dbReference>
<dbReference type="GO" id="GO:0009045">
    <property type="term" value="F:xylose isomerase activity"/>
    <property type="evidence" value="ECO:0007669"/>
    <property type="project" value="UniProtKB-UniRule"/>
</dbReference>
<dbReference type="GO" id="GO:0042732">
    <property type="term" value="P:D-xylose metabolic process"/>
    <property type="evidence" value="ECO:0007669"/>
    <property type="project" value="UniProtKB-UniRule"/>
</dbReference>
<dbReference type="Gene3D" id="3.20.20.150">
    <property type="entry name" value="Divalent-metal-dependent TIM barrel enzymes"/>
    <property type="match status" value="1"/>
</dbReference>
<dbReference type="HAMAP" id="MF_00455">
    <property type="entry name" value="Xylose_isom_A"/>
    <property type="match status" value="1"/>
</dbReference>
<dbReference type="InterPro" id="IPR036237">
    <property type="entry name" value="Xyl_isomerase-like_sf"/>
</dbReference>
<dbReference type="InterPro" id="IPR013022">
    <property type="entry name" value="Xyl_isomerase-like_TIM-brl"/>
</dbReference>
<dbReference type="InterPro" id="IPR013453">
    <property type="entry name" value="XylA_actinobac"/>
</dbReference>
<dbReference type="InterPro" id="IPR001998">
    <property type="entry name" value="Xylose_isomerase"/>
</dbReference>
<dbReference type="NCBIfam" id="TIGR02631">
    <property type="entry name" value="xylA_Arthro"/>
    <property type="match status" value="1"/>
</dbReference>
<dbReference type="PANTHER" id="PTHR48408">
    <property type="match status" value="1"/>
</dbReference>
<dbReference type="PANTHER" id="PTHR48408:SF1">
    <property type="entry name" value="XYLOSE ISOMERASE"/>
    <property type="match status" value="1"/>
</dbReference>
<dbReference type="Pfam" id="PF01261">
    <property type="entry name" value="AP_endonuc_2"/>
    <property type="match status" value="1"/>
</dbReference>
<dbReference type="PRINTS" id="PR00688">
    <property type="entry name" value="XYLOSISMRASE"/>
</dbReference>
<dbReference type="SUPFAM" id="SSF51658">
    <property type="entry name" value="Xylose isomerase-like"/>
    <property type="match status" value="1"/>
</dbReference>
<dbReference type="PROSITE" id="PS51415">
    <property type="entry name" value="XYLOSE_ISOMERASE"/>
    <property type="match status" value="1"/>
</dbReference>
<gene>
    <name type="primary">xylA</name>
    <name type="synonym">XI</name>
    <name type="ordered locus">AMIS_10350</name>
</gene>
<name>XYLA_ACTM4</name>
<evidence type="ECO:0000250" key="1"/>
<evidence type="ECO:0000305" key="2"/>
<evidence type="ECO:0007829" key="3">
    <source>
        <dbReference type="PDB" id="1XIM"/>
    </source>
</evidence>
<evidence type="ECO:0007829" key="4">
    <source>
        <dbReference type="PDB" id="2XIN"/>
    </source>
</evidence>
<protein>
    <recommendedName>
        <fullName>Xylose isomerase</fullName>
        <ecNumber>5.3.1.5</ecNumber>
    </recommendedName>
</protein>
<proteinExistence type="evidence at protein level"/>
<comment type="catalytic activity">
    <reaction>
        <text>alpha-D-xylose = alpha-D-xylulofuranose</text>
        <dbReference type="Rhea" id="RHEA:22816"/>
        <dbReference type="ChEBI" id="CHEBI:28518"/>
        <dbReference type="ChEBI" id="CHEBI:188998"/>
        <dbReference type="EC" id="5.3.1.5"/>
    </reaction>
</comment>
<comment type="cofactor">
    <cofactor>
        <name>Mg(2+)</name>
        <dbReference type="ChEBI" id="CHEBI:18420"/>
    </cofactor>
    <text>Binds 2 magnesium ions per subunit.</text>
</comment>
<comment type="subunit">
    <text>Homotetramer.</text>
</comment>
<comment type="subcellular location">
    <subcellularLocation>
        <location>Cytoplasm</location>
    </subcellularLocation>
</comment>
<comment type="similarity">
    <text evidence="2">Belongs to the xylose isomerase family.</text>
</comment>
<feature type="initiator methionine" description="Removed">
    <location>
        <position position="1"/>
    </location>
</feature>
<feature type="chain" id="PRO_0000195757" description="Xylose isomerase">
    <location>
        <begin position="2"/>
        <end position="394"/>
    </location>
</feature>
<feature type="active site">
    <location>
        <position position="54"/>
    </location>
</feature>
<feature type="active site" evidence="1">
    <location>
        <position position="57"/>
    </location>
</feature>
<feature type="binding site">
    <location>
        <position position="181"/>
    </location>
    <ligand>
        <name>Mg(2+)</name>
        <dbReference type="ChEBI" id="CHEBI:18420"/>
        <label>1</label>
    </ligand>
</feature>
<feature type="binding site">
    <location>
        <position position="217"/>
    </location>
    <ligand>
        <name>Mg(2+)</name>
        <dbReference type="ChEBI" id="CHEBI:18420"/>
        <label>1</label>
    </ligand>
</feature>
<feature type="binding site">
    <location>
        <position position="217"/>
    </location>
    <ligand>
        <name>Mg(2+)</name>
        <dbReference type="ChEBI" id="CHEBI:18420"/>
        <label>2</label>
    </ligand>
</feature>
<feature type="binding site">
    <location>
        <position position="220"/>
    </location>
    <ligand>
        <name>Mg(2+)</name>
        <dbReference type="ChEBI" id="CHEBI:18420"/>
        <label>2</label>
    </ligand>
</feature>
<feature type="binding site">
    <location>
        <position position="245"/>
    </location>
    <ligand>
        <name>Mg(2+)</name>
        <dbReference type="ChEBI" id="CHEBI:18420"/>
        <label>1</label>
    </ligand>
</feature>
<feature type="binding site">
    <location>
        <position position="255"/>
    </location>
    <ligand>
        <name>Mg(2+)</name>
        <dbReference type="ChEBI" id="CHEBI:18420"/>
        <label>2</label>
    </ligand>
</feature>
<feature type="binding site">
    <location>
        <position position="257"/>
    </location>
    <ligand>
        <name>Mg(2+)</name>
        <dbReference type="ChEBI" id="CHEBI:18420"/>
        <label>2</label>
    </ligand>
</feature>
<feature type="binding site">
    <location>
        <position position="292"/>
    </location>
    <ligand>
        <name>Mg(2+)</name>
        <dbReference type="ChEBI" id="CHEBI:18420"/>
        <label>1</label>
    </ligand>
</feature>
<feature type="helix" evidence="3">
    <location>
        <begin position="7"/>
        <end position="9"/>
    </location>
</feature>
<feature type="strand" evidence="3">
    <location>
        <begin position="11"/>
        <end position="14"/>
    </location>
</feature>
<feature type="helix" evidence="3">
    <location>
        <begin position="15"/>
        <end position="18"/>
    </location>
</feature>
<feature type="helix" evidence="3">
    <location>
        <begin position="36"/>
        <end position="46"/>
    </location>
</feature>
<feature type="strand" evidence="3">
    <location>
        <begin position="49"/>
        <end position="52"/>
    </location>
</feature>
<feature type="helix" evidence="3">
    <location>
        <begin position="55"/>
        <end position="58"/>
    </location>
</feature>
<feature type="helix" evidence="3">
    <location>
        <begin position="65"/>
        <end position="82"/>
    </location>
</feature>
<feature type="strand" evidence="3">
    <location>
        <begin position="88"/>
        <end position="90"/>
    </location>
</feature>
<feature type="strand" evidence="3">
    <location>
        <begin position="94"/>
        <end position="96"/>
    </location>
</feature>
<feature type="helix" evidence="3">
    <location>
        <begin position="97"/>
        <end position="99"/>
    </location>
</feature>
<feature type="helix" evidence="3">
    <location>
        <begin position="109"/>
        <end position="129"/>
    </location>
</feature>
<feature type="strand" evidence="3">
    <location>
        <begin position="133"/>
        <end position="137"/>
    </location>
</feature>
<feature type="strand" evidence="3">
    <location>
        <begin position="141"/>
        <end position="145"/>
    </location>
</feature>
<feature type="helix" evidence="3">
    <location>
        <begin position="146"/>
        <end position="148"/>
    </location>
</feature>
<feature type="helix" evidence="3">
    <location>
        <begin position="151"/>
        <end position="172"/>
    </location>
</feature>
<feature type="strand" evidence="3">
    <location>
        <begin position="177"/>
        <end position="181"/>
    </location>
</feature>
<feature type="strand" evidence="3">
    <location>
        <begin position="184"/>
        <end position="193"/>
    </location>
</feature>
<feature type="helix" evidence="3">
    <location>
        <begin position="196"/>
        <end position="203"/>
    </location>
</feature>
<feature type="strand" evidence="3">
    <location>
        <begin position="206"/>
        <end position="208"/>
    </location>
</feature>
<feature type="helix" evidence="3">
    <location>
        <begin position="209"/>
        <end position="211"/>
    </location>
</feature>
<feature type="strand" evidence="3">
    <location>
        <begin position="212"/>
        <end position="214"/>
    </location>
</feature>
<feature type="helix" evidence="3">
    <location>
        <begin position="218"/>
        <end position="222"/>
    </location>
</feature>
<feature type="turn" evidence="3">
    <location>
        <begin position="223"/>
        <end position="225"/>
    </location>
</feature>
<feature type="helix" evidence="3">
    <location>
        <begin position="228"/>
        <end position="238"/>
    </location>
</feature>
<feature type="strand" evidence="4">
    <location>
        <begin position="244"/>
        <end position="246"/>
    </location>
</feature>
<feature type="strand" evidence="3">
    <location>
        <begin position="251"/>
        <end position="254"/>
    </location>
</feature>
<feature type="strand" evidence="3">
    <location>
        <begin position="262"/>
        <end position="264"/>
    </location>
</feature>
<feature type="helix" evidence="3">
    <location>
        <begin position="265"/>
        <end position="276"/>
    </location>
</feature>
<feature type="helix" evidence="3">
    <location>
        <begin position="279"/>
        <end position="281"/>
    </location>
</feature>
<feature type="strand" evidence="3">
    <location>
        <begin position="289"/>
        <end position="291"/>
    </location>
</feature>
<feature type="helix" evidence="3">
    <location>
        <begin position="301"/>
        <end position="327"/>
    </location>
</feature>
<feature type="helix" evidence="3">
    <location>
        <begin position="329"/>
        <end position="337"/>
    </location>
</feature>
<feature type="helix" evidence="3">
    <location>
        <begin position="341"/>
        <end position="344"/>
    </location>
</feature>
<feature type="helix" evidence="3">
    <location>
        <begin position="354"/>
        <end position="359"/>
    </location>
</feature>
<feature type="helix" evidence="3">
    <location>
        <begin position="361"/>
        <end position="363"/>
    </location>
</feature>
<feature type="turn" evidence="3">
    <location>
        <begin position="364"/>
        <end position="366"/>
    </location>
</feature>
<feature type="helix" evidence="3">
    <location>
        <begin position="369"/>
        <end position="373"/>
    </location>
</feature>
<feature type="helix" evidence="3">
    <location>
        <begin position="379"/>
        <end position="390"/>
    </location>
</feature>